<sequence length="246" mass="27048">MLQNIRIVLVETSHTGNMGSVARAMKTMGLTNLWLVNPLVKPDSQAIALAAGASDVIGNAHIVDTLDEALAGCSLVVGTSARSRTLPWPMLDPRECGLKSVAEAANTPVALVFGRERVGLTNEELQKCHYHVAIAANPEYSSLNLAMAVQVIAYEVRMAWLATQENGEQVEHEETPYPLVDDLERFYGHLEQTLLATGFIRENHPGQVMNKLRRLFTRARPESQELNILRGILASIEQQNKGNKAE</sequence>
<feature type="chain" id="PRO_0000313855" description="tRNA (cytidine/uridine-2'-O-)-methyltransferase TrmJ">
    <location>
        <begin position="1"/>
        <end position="246"/>
    </location>
</feature>
<feature type="binding site" evidence="1">
    <location>
        <begin position="79"/>
        <end position="81"/>
    </location>
    <ligand>
        <name>S-adenosyl-L-methionine</name>
        <dbReference type="ChEBI" id="CHEBI:59789"/>
    </ligand>
</feature>
<feature type="binding site" evidence="1">
    <location>
        <position position="114"/>
    </location>
    <ligand>
        <name>S-adenosyl-L-methionine</name>
        <dbReference type="ChEBI" id="CHEBI:59789"/>
    </ligand>
</feature>
<feature type="binding site" evidence="1">
    <location>
        <position position="134"/>
    </location>
    <ligand>
        <name>S-adenosyl-L-methionine</name>
        <dbReference type="ChEBI" id="CHEBI:59789"/>
    </ligand>
</feature>
<feature type="binding site" evidence="1">
    <location>
        <begin position="141"/>
        <end position="143"/>
    </location>
    <ligand>
        <name>S-adenosyl-L-methionine</name>
        <dbReference type="ChEBI" id="CHEBI:59789"/>
    </ligand>
</feature>
<protein>
    <recommendedName>
        <fullName evidence="1">tRNA (cytidine/uridine-2'-O-)-methyltransferase TrmJ</fullName>
        <ecNumber evidence="1">2.1.1.200</ecNumber>
    </recommendedName>
    <alternativeName>
        <fullName evidence="1">tRNA (cytidine(32)/uridine(32)-2'-O)-methyltransferase</fullName>
    </alternativeName>
    <alternativeName>
        <fullName evidence="1">tRNA Cm32/Um32 methyltransferase</fullName>
    </alternativeName>
</protein>
<gene>
    <name type="primary">trmJ</name>
    <name type="ordered locus">Ecok1_24650</name>
    <name type="ORF">APECO1_3993</name>
</gene>
<keyword id="KW-0963">Cytoplasm</keyword>
<keyword id="KW-0489">Methyltransferase</keyword>
<keyword id="KW-1185">Reference proteome</keyword>
<keyword id="KW-0949">S-adenosyl-L-methionine</keyword>
<keyword id="KW-0808">Transferase</keyword>
<keyword id="KW-0819">tRNA processing</keyword>
<evidence type="ECO:0000250" key="1">
    <source>
        <dbReference type="UniProtKB" id="P0AE01"/>
    </source>
</evidence>
<evidence type="ECO:0000305" key="2"/>
<proteinExistence type="inferred from homology"/>
<organism>
    <name type="scientific">Escherichia coli O1:K1 / APEC</name>
    <dbReference type="NCBI Taxonomy" id="405955"/>
    <lineage>
        <taxon>Bacteria</taxon>
        <taxon>Pseudomonadati</taxon>
        <taxon>Pseudomonadota</taxon>
        <taxon>Gammaproteobacteria</taxon>
        <taxon>Enterobacterales</taxon>
        <taxon>Enterobacteriaceae</taxon>
        <taxon>Escherichia</taxon>
    </lineage>
</organism>
<reference key="1">
    <citation type="journal article" date="2007" name="J. Bacteriol.">
        <title>The genome sequence of avian pathogenic Escherichia coli strain O1:K1:H7 shares strong similarities with human extraintestinal pathogenic E. coli genomes.</title>
        <authorList>
            <person name="Johnson T.J."/>
            <person name="Kariyawasam S."/>
            <person name="Wannemuehler Y."/>
            <person name="Mangiamele P."/>
            <person name="Johnson S.J."/>
            <person name="Doetkott C."/>
            <person name="Skyberg J.A."/>
            <person name="Lynne A.M."/>
            <person name="Johnson J.R."/>
            <person name="Nolan L.K."/>
        </authorList>
    </citation>
    <scope>NUCLEOTIDE SEQUENCE [LARGE SCALE GENOMIC DNA]</scope>
</reference>
<comment type="function">
    <text evidence="1">Catalyzes the formation of 2'O-methylated cytidine (Cm32) or 2'O-methylated uridine (Um32) at position 32 in tRNA.</text>
</comment>
<comment type="catalytic activity">
    <reaction evidence="1">
        <text>cytidine(32) in tRNA + S-adenosyl-L-methionine = 2'-O-methylcytidine(32) in tRNA + S-adenosyl-L-homocysteine + H(+)</text>
        <dbReference type="Rhea" id="RHEA:42932"/>
        <dbReference type="Rhea" id="RHEA-COMP:10288"/>
        <dbReference type="Rhea" id="RHEA-COMP:10289"/>
        <dbReference type="ChEBI" id="CHEBI:15378"/>
        <dbReference type="ChEBI" id="CHEBI:57856"/>
        <dbReference type="ChEBI" id="CHEBI:59789"/>
        <dbReference type="ChEBI" id="CHEBI:74495"/>
        <dbReference type="ChEBI" id="CHEBI:82748"/>
        <dbReference type="EC" id="2.1.1.200"/>
    </reaction>
</comment>
<comment type="catalytic activity">
    <reaction evidence="1">
        <text>uridine(32) in tRNA + S-adenosyl-L-methionine = 2'-O-methyluridine(32) in tRNA + S-adenosyl-L-homocysteine + H(+)</text>
        <dbReference type="Rhea" id="RHEA:42936"/>
        <dbReference type="Rhea" id="RHEA-COMP:10107"/>
        <dbReference type="Rhea" id="RHEA-COMP:10290"/>
        <dbReference type="ChEBI" id="CHEBI:15378"/>
        <dbReference type="ChEBI" id="CHEBI:57856"/>
        <dbReference type="ChEBI" id="CHEBI:59789"/>
        <dbReference type="ChEBI" id="CHEBI:65315"/>
        <dbReference type="ChEBI" id="CHEBI:74478"/>
        <dbReference type="EC" id="2.1.1.200"/>
    </reaction>
</comment>
<comment type="subunit">
    <text evidence="1">Homodimer.</text>
</comment>
<comment type="subcellular location">
    <subcellularLocation>
        <location evidence="1">Cytoplasm</location>
    </subcellularLocation>
</comment>
<comment type="similarity">
    <text evidence="2">Belongs to the class IV-like SAM-binding methyltransferase superfamily. RNA methyltransferase TrmH family.</text>
</comment>
<accession>A1AE69</accession>
<name>TRMJ_ECOK1</name>
<dbReference type="EC" id="2.1.1.200" evidence="1"/>
<dbReference type="EMBL" id="CP000468">
    <property type="protein sequence ID" value="ABJ01959.1"/>
    <property type="molecule type" value="Genomic_DNA"/>
</dbReference>
<dbReference type="RefSeq" id="WP_000940019.1">
    <property type="nucleotide sequence ID" value="NZ_CADILS010000012.1"/>
</dbReference>
<dbReference type="SMR" id="A1AE69"/>
<dbReference type="GeneID" id="86860658"/>
<dbReference type="KEGG" id="ecv:APECO1_3993"/>
<dbReference type="HOGENOM" id="CLU_056931_0_1_6"/>
<dbReference type="Proteomes" id="UP000008216">
    <property type="component" value="Chromosome"/>
</dbReference>
<dbReference type="GO" id="GO:0005829">
    <property type="term" value="C:cytosol"/>
    <property type="evidence" value="ECO:0007669"/>
    <property type="project" value="TreeGrafter"/>
</dbReference>
<dbReference type="GO" id="GO:0003723">
    <property type="term" value="F:RNA binding"/>
    <property type="evidence" value="ECO:0007669"/>
    <property type="project" value="InterPro"/>
</dbReference>
<dbReference type="GO" id="GO:0160206">
    <property type="term" value="F:tRNA (cytidine(32)/uridine(32)-2'-O)-methyltransferase activity"/>
    <property type="evidence" value="ECO:0007669"/>
    <property type="project" value="UniProtKB-EC"/>
</dbReference>
<dbReference type="GO" id="GO:0002128">
    <property type="term" value="P:tRNA nucleoside ribose methylation"/>
    <property type="evidence" value="ECO:0007669"/>
    <property type="project" value="TreeGrafter"/>
</dbReference>
<dbReference type="CDD" id="cd18093">
    <property type="entry name" value="SpoU-like_TrmJ"/>
    <property type="match status" value="1"/>
</dbReference>
<dbReference type="FunFam" id="1.10.8.590:FF:000001">
    <property type="entry name" value="tRNA:Cm32/Um32 methyltransferase"/>
    <property type="match status" value="1"/>
</dbReference>
<dbReference type="FunFam" id="3.40.1280.10:FF:000006">
    <property type="entry name" value="Uncharacterized tRNA/rRNA methyltransferase HI_0380"/>
    <property type="match status" value="1"/>
</dbReference>
<dbReference type="Gene3D" id="1.10.8.590">
    <property type="match status" value="1"/>
</dbReference>
<dbReference type="Gene3D" id="3.40.1280.10">
    <property type="match status" value="1"/>
</dbReference>
<dbReference type="InterPro" id="IPR029028">
    <property type="entry name" value="Alpha/beta_knot_MTases"/>
</dbReference>
<dbReference type="InterPro" id="IPR004384">
    <property type="entry name" value="RNA_MeTrfase_TrmJ/LasT"/>
</dbReference>
<dbReference type="InterPro" id="IPR001537">
    <property type="entry name" value="SpoU_MeTrfase"/>
</dbReference>
<dbReference type="InterPro" id="IPR029026">
    <property type="entry name" value="tRNA_m1G_MTases_N"/>
</dbReference>
<dbReference type="NCBIfam" id="NF011694">
    <property type="entry name" value="PRK15114.1"/>
    <property type="match status" value="1"/>
</dbReference>
<dbReference type="NCBIfam" id="TIGR00050">
    <property type="entry name" value="rRNA_methyl_1"/>
    <property type="match status" value="1"/>
</dbReference>
<dbReference type="PANTHER" id="PTHR42786:SF2">
    <property type="entry name" value="TRNA (CYTIDINE_URIDINE-2'-O-)-METHYLTRANSFERASE TRMJ"/>
    <property type="match status" value="1"/>
</dbReference>
<dbReference type="PANTHER" id="PTHR42786">
    <property type="entry name" value="TRNA/RRNA METHYLTRANSFERASE"/>
    <property type="match status" value="1"/>
</dbReference>
<dbReference type="Pfam" id="PF00588">
    <property type="entry name" value="SpoU_methylase"/>
    <property type="match status" value="1"/>
</dbReference>
<dbReference type="PIRSF" id="PIRSF004808">
    <property type="entry name" value="LasT"/>
    <property type="match status" value="1"/>
</dbReference>
<dbReference type="SUPFAM" id="SSF75217">
    <property type="entry name" value="alpha/beta knot"/>
    <property type="match status" value="1"/>
</dbReference>